<proteinExistence type="predicted"/>
<reference key="1">
    <citation type="journal article" date="1995" name="Microbiology">
        <title>Complete nucleotide sequence of a skin element excised by DNA rearrangement during sporulation in Bacillus subtilis.</title>
        <authorList>
            <person name="Takemaru K."/>
            <person name="Mizuno M."/>
            <person name="Sato T."/>
            <person name="Takeuchi M."/>
            <person name="Kobayashi Y."/>
        </authorList>
    </citation>
    <scope>NUCLEOTIDE SEQUENCE [GENOMIC DNA]</scope>
    <source>
        <strain>168 / JH642</strain>
    </source>
</reference>
<reference key="2">
    <citation type="journal article" date="1996" name="Microbiology">
        <title>Systematic sequencing of the 283 kb 210 degrees-232 degrees region of the Bacillus subtilis genome containing the skin element and many sporulation genes.</title>
        <authorList>
            <person name="Mizuno M."/>
            <person name="Masuda S."/>
            <person name="Takemaru K."/>
            <person name="Hosono S."/>
            <person name="Sato T."/>
            <person name="Takeuchi M."/>
            <person name="Kobayashi Y."/>
        </authorList>
    </citation>
    <scope>NUCLEOTIDE SEQUENCE [GENOMIC DNA]</scope>
    <source>
        <strain>168 / JH642</strain>
    </source>
</reference>
<reference key="3">
    <citation type="journal article" date="1997" name="Nature">
        <title>The complete genome sequence of the Gram-positive bacterium Bacillus subtilis.</title>
        <authorList>
            <person name="Kunst F."/>
            <person name="Ogasawara N."/>
            <person name="Moszer I."/>
            <person name="Albertini A.M."/>
            <person name="Alloni G."/>
            <person name="Azevedo V."/>
            <person name="Bertero M.G."/>
            <person name="Bessieres P."/>
            <person name="Bolotin A."/>
            <person name="Borchert S."/>
            <person name="Borriss R."/>
            <person name="Boursier L."/>
            <person name="Brans A."/>
            <person name="Braun M."/>
            <person name="Brignell S.C."/>
            <person name="Bron S."/>
            <person name="Brouillet S."/>
            <person name="Bruschi C.V."/>
            <person name="Caldwell B."/>
            <person name="Capuano V."/>
            <person name="Carter N.M."/>
            <person name="Choi S.-K."/>
            <person name="Codani J.-J."/>
            <person name="Connerton I.F."/>
            <person name="Cummings N.J."/>
            <person name="Daniel R.A."/>
            <person name="Denizot F."/>
            <person name="Devine K.M."/>
            <person name="Duesterhoeft A."/>
            <person name="Ehrlich S.D."/>
            <person name="Emmerson P.T."/>
            <person name="Entian K.-D."/>
            <person name="Errington J."/>
            <person name="Fabret C."/>
            <person name="Ferrari E."/>
            <person name="Foulger D."/>
            <person name="Fritz C."/>
            <person name="Fujita M."/>
            <person name="Fujita Y."/>
            <person name="Fuma S."/>
            <person name="Galizzi A."/>
            <person name="Galleron N."/>
            <person name="Ghim S.-Y."/>
            <person name="Glaser P."/>
            <person name="Goffeau A."/>
            <person name="Golightly E.J."/>
            <person name="Grandi G."/>
            <person name="Guiseppi G."/>
            <person name="Guy B.J."/>
            <person name="Haga K."/>
            <person name="Haiech J."/>
            <person name="Harwood C.R."/>
            <person name="Henaut A."/>
            <person name="Hilbert H."/>
            <person name="Holsappel S."/>
            <person name="Hosono S."/>
            <person name="Hullo M.-F."/>
            <person name="Itaya M."/>
            <person name="Jones L.-M."/>
            <person name="Joris B."/>
            <person name="Karamata D."/>
            <person name="Kasahara Y."/>
            <person name="Klaerr-Blanchard M."/>
            <person name="Klein C."/>
            <person name="Kobayashi Y."/>
            <person name="Koetter P."/>
            <person name="Koningstein G."/>
            <person name="Krogh S."/>
            <person name="Kumano M."/>
            <person name="Kurita K."/>
            <person name="Lapidus A."/>
            <person name="Lardinois S."/>
            <person name="Lauber J."/>
            <person name="Lazarevic V."/>
            <person name="Lee S.-M."/>
            <person name="Levine A."/>
            <person name="Liu H."/>
            <person name="Masuda S."/>
            <person name="Mauel C."/>
            <person name="Medigue C."/>
            <person name="Medina N."/>
            <person name="Mellado R.P."/>
            <person name="Mizuno M."/>
            <person name="Moestl D."/>
            <person name="Nakai S."/>
            <person name="Noback M."/>
            <person name="Noone D."/>
            <person name="O'Reilly M."/>
            <person name="Ogawa K."/>
            <person name="Ogiwara A."/>
            <person name="Oudega B."/>
            <person name="Park S.-H."/>
            <person name="Parro V."/>
            <person name="Pohl T.M."/>
            <person name="Portetelle D."/>
            <person name="Porwollik S."/>
            <person name="Prescott A.M."/>
            <person name="Presecan E."/>
            <person name="Pujic P."/>
            <person name="Purnelle B."/>
            <person name="Rapoport G."/>
            <person name="Rey M."/>
            <person name="Reynolds S."/>
            <person name="Rieger M."/>
            <person name="Rivolta C."/>
            <person name="Rocha E."/>
            <person name="Roche B."/>
            <person name="Rose M."/>
            <person name="Sadaie Y."/>
            <person name="Sato T."/>
            <person name="Scanlan E."/>
            <person name="Schleich S."/>
            <person name="Schroeter R."/>
            <person name="Scoffone F."/>
            <person name="Sekiguchi J."/>
            <person name="Sekowska A."/>
            <person name="Seror S.J."/>
            <person name="Serror P."/>
            <person name="Shin B.-S."/>
            <person name="Soldo B."/>
            <person name="Sorokin A."/>
            <person name="Tacconi E."/>
            <person name="Takagi T."/>
            <person name="Takahashi H."/>
            <person name="Takemaru K."/>
            <person name="Takeuchi M."/>
            <person name="Tamakoshi A."/>
            <person name="Tanaka T."/>
            <person name="Terpstra P."/>
            <person name="Tognoni A."/>
            <person name="Tosato V."/>
            <person name="Uchiyama S."/>
            <person name="Vandenbol M."/>
            <person name="Vannier F."/>
            <person name="Vassarotti A."/>
            <person name="Viari A."/>
            <person name="Wambutt R."/>
            <person name="Wedler E."/>
            <person name="Wedler H."/>
            <person name="Weitzenegger T."/>
            <person name="Winters P."/>
            <person name="Wipat A."/>
            <person name="Yamamoto H."/>
            <person name="Yamane K."/>
            <person name="Yasumoto K."/>
            <person name="Yata K."/>
            <person name="Yoshida K."/>
            <person name="Yoshikawa H.-F."/>
            <person name="Zumstein E."/>
            <person name="Yoshikawa H."/>
            <person name="Danchin A."/>
        </authorList>
    </citation>
    <scope>NUCLEOTIDE SEQUENCE [LARGE SCALE GENOMIC DNA]</scope>
    <source>
        <strain>168</strain>
    </source>
</reference>
<reference key="4">
    <citation type="journal article" date="1995" name="Gene">
        <title>Analysis of a Bacillus subtilis genome fragment using a co-operative computer system prototype.</title>
        <authorList>
            <person name="Medigue C."/>
            <person name="Moszer I."/>
            <person name="Viari A."/>
            <person name="Danchin A."/>
        </authorList>
    </citation>
    <scope>IDENTIFICATION</scope>
</reference>
<organism>
    <name type="scientific">Bacillus subtilis (strain 168)</name>
    <dbReference type="NCBI Taxonomy" id="224308"/>
    <lineage>
        <taxon>Bacteria</taxon>
        <taxon>Bacillati</taxon>
        <taxon>Bacillota</taxon>
        <taxon>Bacilli</taxon>
        <taxon>Bacillales</taxon>
        <taxon>Bacillaceae</taxon>
        <taxon>Bacillus</taxon>
    </lineage>
</organism>
<dbReference type="EMBL" id="D32216">
    <property type="protein sequence ID" value="BAA06935.1"/>
    <property type="molecule type" value="Genomic_DNA"/>
</dbReference>
<dbReference type="EMBL" id="D84432">
    <property type="protein sequence ID" value="BAA12397.1"/>
    <property type="molecule type" value="Genomic_DNA"/>
</dbReference>
<dbReference type="EMBL" id="AL009126">
    <property type="protein sequence ID" value="CAB14558.1"/>
    <property type="molecule type" value="Genomic_DNA"/>
</dbReference>
<dbReference type="PIR" id="E69946">
    <property type="entry name" value="E69946"/>
</dbReference>
<dbReference type="RefSeq" id="NP_390494.1">
    <property type="nucleotide sequence ID" value="NC_000964.3"/>
</dbReference>
<dbReference type="RefSeq" id="WP_004398748.1">
    <property type="nucleotide sequence ID" value="NZ_OZ025638.1"/>
</dbReference>
<dbReference type="SMR" id="P45918"/>
<dbReference type="FunCoup" id="P45918">
    <property type="interactions" value="134"/>
</dbReference>
<dbReference type="STRING" id="224308.BSU26170"/>
<dbReference type="PaxDb" id="224308-BSU26170"/>
<dbReference type="EnsemblBacteria" id="CAB14558">
    <property type="protein sequence ID" value="CAB14558"/>
    <property type="gene ID" value="BSU_26170"/>
</dbReference>
<dbReference type="GeneID" id="937723"/>
<dbReference type="KEGG" id="bsu:BSU26170"/>
<dbReference type="PATRIC" id="fig|224308.179.peg.2843"/>
<dbReference type="eggNOG" id="COG2369">
    <property type="taxonomic scope" value="Bacteria"/>
</dbReference>
<dbReference type="InParanoid" id="P45918"/>
<dbReference type="OrthoDB" id="2044628at2"/>
<dbReference type="BioCyc" id="BSUB:BSU26170-MONOMER"/>
<dbReference type="Proteomes" id="UP000001570">
    <property type="component" value="Chromosome"/>
</dbReference>
<dbReference type="InterPro" id="IPR006528">
    <property type="entry name" value="Phage_head_morphogenesis_dom"/>
</dbReference>
<dbReference type="Pfam" id="PF04233">
    <property type="entry name" value="Phage_Mu_F"/>
    <property type="match status" value="1"/>
</dbReference>
<name>YQBB_BACSU</name>
<evidence type="ECO:0000256" key="1">
    <source>
        <dbReference type="SAM" id="MobiDB-lite"/>
    </source>
</evidence>
<feature type="chain" id="PRO_0000049753" description="Uncharacterized protein YqbB">
    <location>
        <begin position="1"/>
        <end position="305"/>
    </location>
</feature>
<feature type="region of interest" description="Disordered" evidence="1">
    <location>
        <begin position="208"/>
        <end position="236"/>
    </location>
</feature>
<feature type="compositionally biased region" description="Basic residues" evidence="1">
    <location>
        <begin position="215"/>
        <end position="225"/>
    </location>
</feature>
<gene>
    <name type="primary">yqbB</name>
    <name type="ordered locus">BSU26170</name>
</gene>
<protein>
    <recommendedName>
        <fullName>Uncharacterized protein YqbB</fullName>
    </recommendedName>
</protein>
<keyword id="KW-1185">Reference proteome</keyword>
<sequence length="305" mass="34921">MNKTDKLLESLNVFIQKAEENQYKQLGEMVPDFPGKSNIPKYVEEYEKGIARLLRRQHKKFLDGLKGFVSKDSEETLKALLVFFTQNLFAEDDFEEEFQELTEGFLQQTIEEMAEVIMDSIDPEVPFKVLSNRTINWIKDWSKKLAEIMKLNTHEVVEDVLTNAIENGSSIQDIELTLKDMPQFDRERARTTAITEVLAASSAAQHESYAQSPAVKKKKWRHSGGKKNNPRENHIDLDGTVIGVDEEFQIPGSSETCMFPRDPKLSTRERVNCHCVLSPVVDSKILGLSPEEKEEIQREVLANME</sequence>
<accession>P45918</accession>